<organism>
    <name type="scientific">Thermotoga sp. (strain RQ2)</name>
    <dbReference type="NCBI Taxonomy" id="126740"/>
    <lineage>
        <taxon>Bacteria</taxon>
        <taxon>Thermotogati</taxon>
        <taxon>Thermotogota</taxon>
        <taxon>Thermotogae</taxon>
        <taxon>Thermotogales</taxon>
        <taxon>Thermotogaceae</taxon>
        <taxon>Thermotoga</taxon>
    </lineage>
</organism>
<sequence>MVNPFIKEAKEKMKRTLEKIEDELRKMRTGKPSPAILEEIKVDYYGVPTPVNQLATISISEERTLVIKPWDKSVLSLIEKAINASDLGLNPINDGNVIRLVFPSPTTEQREKWVKKAKEIVEEGKIAIRNIRREILKKIKEDQKEGLIPEDDAKRLENEIQKLTDEFIEKLDEVFEIKKEEIMEF</sequence>
<reference key="1">
    <citation type="journal article" date="2011" name="J. Bacteriol.">
        <title>Genome sequence of Thermotoga sp. strain RQ2, a hyperthermophilic bacterium isolated from a geothermally heated region of the seafloor near Ribeira Quente, the Azores.</title>
        <authorList>
            <person name="Swithers K.S."/>
            <person name="DiPippo J.L."/>
            <person name="Bruce D.C."/>
            <person name="Detter C."/>
            <person name="Tapia R."/>
            <person name="Han S."/>
            <person name="Saunders E."/>
            <person name="Goodwin L.A."/>
            <person name="Han J."/>
            <person name="Woyke T."/>
            <person name="Pitluck S."/>
            <person name="Pennacchio L."/>
            <person name="Nolan M."/>
            <person name="Mikhailova N."/>
            <person name="Lykidis A."/>
            <person name="Land M.L."/>
            <person name="Brettin T."/>
            <person name="Stetter K.O."/>
            <person name="Nelson K.E."/>
            <person name="Gogarten J.P."/>
            <person name="Noll K.M."/>
        </authorList>
    </citation>
    <scope>NUCLEOTIDE SEQUENCE [LARGE SCALE GENOMIC DNA]</scope>
    <source>
        <strain>RQ2</strain>
    </source>
</reference>
<dbReference type="EMBL" id="CP000969">
    <property type="protein sequence ID" value="ACB09774.1"/>
    <property type="molecule type" value="Genomic_DNA"/>
</dbReference>
<dbReference type="RefSeq" id="WP_004081616.1">
    <property type="nucleotide sequence ID" value="NC_010483.1"/>
</dbReference>
<dbReference type="BMRB" id="B1LBS6"/>
<dbReference type="SMR" id="B1LBS6"/>
<dbReference type="KEGG" id="trq:TRQ2_1430"/>
<dbReference type="HOGENOM" id="CLU_073981_2_0_0"/>
<dbReference type="Proteomes" id="UP000001687">
    <property type="component" value="Chromosome"/>
</dbReference>
<dbReference type="GO" id="GO:0005737">
    <property type="term" value="C:cytoplasm"/>
    <property type="evidence" value="ECO:0007669"/>
    <property type="project" value="UniProtKB-SubCell"/>
</dbReference>
<dbReference type="GO" id="GO:0043023">
    <property type="term" value="F:ribosomal large subunit binding"/>
    <property type="evidence" value="ECO:0007669"/>
    <property type="project" value="TreeGrafter"/>
</dbReference>
<dbReference type="GO" id="GO:0006415">
    <property type="term" value="P:translational termination"/>
    <property type="evidence" value="ECO:0007669"/>
    <property type="project" value="UniProtKB-UniRule"/>
</dbReference>
<dbReference type="CDD" id="cd00520">
    <property type="entry name" value="RRF"/>
    <property type="match status" value="1"/>
</dbReference>
<dbReference type="FunFam" id="1.10.132.20:FF:000001">
    <property type="entry name" value="Ribosome-recycling factor"/>
    <property type="match status" value="1"/>
</dbReference>
<dbReference type="FunFam" id="3.30.1360.40:FF:000001">
    <property type="entry name" value="Ribosome-recycling factor"/>
    <property type="match status" value="1"/>
</dbReference>
<dbReference type="Gene3D" id="3.30.1360.40">
    <property type="match status" value="1"/>
</dbReference>
<dbReference type="Gene3D" id="1.10.132.20">
    <property type="entry name" value="Ribosome-recycling factor"/>
    <property type="match status" value="1"/>
</dbReference>
<dbReference type="HAMAP" id="MF_00040">
    <property type="entry name" value="RRF"/>
    <property type="match status" value="1"/>
</dbReference>
<dbReference type="InterPro" id="IPR002661">
    <property type="entry name" value="Ribosome_recyc_fac"/>
</dbReference>
<dbReference type="InterPro" id="IPR023584">
    <property type="entry name" value="Ribosome_recyc_fac_dom"/>
</dbReference>
<dbReference type="InterPro" id="IPR036191">
    <property type="entry name" value="RRF_sf"/>
</dbReference>
<dbReference type="NCBIfam" id="TIGR00496">
    <property type="entry name" value="frr"/>
    <property type="match status" value="1"/>
</dbReference>
<dbReference type="PANTHER" id="PTHR20982:SF3">
    <property type="entry name" value="MITOCHONDRIAL RIBOSOME RECYCLING FACTOR PSEUDO 1"/>
    <property type="match status" value="1"/>
</dbReference>
<dbReference type="PANTHER" id="PTHR20982">
    <property type="entry name" value="RIBOSOME RECYCLING FACTOR"/>
    <property type="match status" value="1"/>
</dbReference>
<dbReference type="Pfam" id="PF01765">
    <property type="entry name" value="RRF"/>
    <property type="match status" value="1"/>
</dbReference>
<dbReference type="SUPFAM" id="SSF55194">
    <property type="entry name" value="Ribosome recycling factor, RRF"/>
    <property type="match status" value="1"/>
</dbReference>
<accession>B1LBS6</accession>
<keyword id="KW-0963">Cytoplasm</keyword>
<keyword id="KW-0648">Protein biosynthesis</keyword>
<name>RRF_THESQ</name>
<comment type="function">
    <text evidence="1">Responsible for the release of ribosomes from messenger RNA at the termination of protein biosynthesis. May increase the efficiency of translation by recycling ribosomes from one round of translation to another.</text>
</comment>
<comment type="subcellular location">
    <subcellularLocation>
        <location evidence="1">Cytoplasm</location>
    </subcellularLocation>
</comment>
<comment type="similarity">
    <text evidence="1">Belongs to the RRF family.</text>
</comment>
<feature type="chain" id="PRO_1000090798" description="Ribosome-recycling factor">
    <location>
        <begin position="1"/>
        <end position="185"/>
    </location>
</feature>
<proteinExistence type="inferred from homology"/>
<gene>
    <name evidence="1" type="primary">frr</name>
    <name type="ordered locus">TRQ2_1430</name>
</gene>
<evidence type="ECO:0000255" key="1">
    <source>
        <dbReference type="HAMAP-Rule" id="MF_00040"/>
    </source>
</evidence>
<protein>
    <recommendedName>
        <fullName evidence="1">Ribosome-recycling factor</fullName>
        <shortName evidence="1">RRF</shortName>
    </recommendedName>
    <alternativeName>
        <fullName evidence="1">Ribosome-releasing factor</fullName>
    </alternativeName>
</protein>